<proteinExistence type="inferred from homology"/>
<evidence type="ECO:0000255" key="1">
    <source>
        <dbReference type="HAMAP-Rule" id="MF_01325"/>
    </source>
</evidence>
<evidence type="ECO:0000256" key="2">
    <source>
        <dbReference type="SAM" id="MobiDB-lite"/>
    </source>
</evidence>
<evidence type="ECO:0000305" key="3"/>
<sequence length="208" mass="22383">MTKGILGKKVGMTQIFTESGEFIPVTVIEATPNVVLQVKTVETDGYEAVQVGFDDKREVLSNKPAKGHVAKADTAPKRFIREFKNIEGLEVGQEITVEQFEAGDVVDVTGTTKGKGFQGAIKRHGQSRGPMAHGSRYHRRPGSMGPVAPNRVFKGKNLAGRMGGNRVTVQNLEVVQVVPEKNVILIKGNVPGAKKSLIIIKSAVKAAK</sequence>
<protein>
    <recommendedName>
        <fullName evidence="1">Large ribosomal subunit protein uL3</fullName>
    </recommendedName>
    <alternativeName>
        <fullName evidence="3">50S ribosomal protein L3</fullName>
    </alternativeName>
</protein>
<gene>
    <name evidence="1" type="primary">rplC</name>
    <name type="ordered locus">SMU_2025</name>
</gene>
<comment type="function">
    <text evidence="1">One of the primary rRNA binding proteins, it binds directly near the 3'-end of the 23S rRNA, where it nucleates assembly of the 50S subunit.</text>
</comment>
<comment type="subunit">
    <text evidence="1">Part of the 50S ribosomal subunit. Forms a cluster with proteins L14 and L19.</text>
</comment>
<comment type="similarity">
    <text evidence="1">Belongs to the universal ribosomal protein uL3 family.</text>
</comment>
<reference key="1">
    <citation type="journal article" date="2002" name="Proc. Natl. Acad. Sci. U.S.A.">
        <title>Genome sequence of Streptococcus mutans UA159, a cariogenic dental pathogen.</title>
        <authorList>
            <person name="Ajdic D.J."/>
            <person name="McShan W.M."/>
            <person name="McLaughlin R.E."/>
            <person name="Savic G."/>
            <person name="Chang J."/>
            <person name="Carson M.B."/>
            <person name="Primeaux C."/>
            <person name="Tian R."/>
            <person name="Kenton S."/>
            <person name="Jia H.G."/>
            <person name="Lin S.P."/>
            <person name="Qian Y."/>
            <person name="Li S."/>
            <person name="Zhu H."/>
            <person name="Najar F.Z."/>
            <person name="Lai H."/>
            <person name="White J."/>
            <person name="Roe B.A."/>
            <person name="Ferretti J.J."/>
        </authorList>
    </citation>
    <scope>NUCLEOTIDE SEQUENCE [LARGE SCALE GENOMIC DNA]</scope>
    <source>
        <strain>ATCC 700610 / UA159</strain>
    </source>
</reference>
<feature type="chain" id="PRO_0000077167" description="Large ribosomal subunit protein uL3">
    <location>
        <begin position="1"/>
        <end position="208"/>
    </location>
</feature>
<feature type="region of interest" description="Disordered" evidence="2">
    <location>
        <begin position="116"/>
        <end position="146"/>
    </location>
</feature>
<keyword id="KW-1185">Reference proteome</keyword>
<keyword id="KW-0687">Ribonucleoprotein</keyword>
<keyword id="KW-0689">Ribosomal protein</keyword>
<keyword id="KW-0694">RNA-binding</keyword>
<keyword id="KW-0699">rRNA-binding</keyword>
<name>RL3_STRMU</name>
<organism>
    <name type="scientific">Streptococcus mutans serotype c (strain ATCC 700610 / UA159)</name>
    <dbReference type="NCBI Taxonomy" id="210007"/>
    <lineage>
        <taxon>Bacteria</taxon>
        <taxon>Bacillati</taxon>
        <taxon>Bacillota</taxon>
        <taxon>Bacilli</taxon>
        <taxon>Lactobacillales</taxon>
        <taxon>Streptococcaceae</taxon>
        <taxon>Streptococcus</taxon>
    </lineage>
</organism>
<dbReference type="EMBL" id="AE014133">
    <property type="protein sequence ID" value="AAN59628.1"/>
    <property type="molecule type" value="Genomic_DNA"/>
</dbReference>
<dbReference type="RefSeq" id="NP_722322.1">
    <property type="nucleotide sequence ID" value="NC_004350.2"/>
</dbReference>
<dbReference type="RefSeq" id="WP_002262340.1">
    <property type="nucleotide sequence ID" value="NC_004350.2"/>
</dbReference>
<dbReference type="SMR" id="Q8DS16"/>
<dbReference type="STRING" id="210007.SMU_2025"/>
<dbReference type="KEGG" id="smu:SMU_2025"/>
<dbReference type="PATRIC" id="fig|210007.7.peg.1805"/>
<dbReference type="eggNOG" id="COG0087">
    <property type="taxonomic scope" value="Bacteria"/>
</dbReference>
<dbReference type="HOGENOM" id="CLU_044142_4_1_9"/>
<dbReference type="OrthoDB" id="9806135at2"/>
<dbReference type="PhylomeDB" id="Q8DS16"/>
<dbReference type="Proteomes" id="UP000002512">
    <property type="component" value="Chromosome"/>
</dbReference>
<dbReference type="GO" id="GO:0022625">
    <property type="term" value="C:cytosolic large ribosomal subunit"/>
    <property type="evidence" value="ECO:0007669"/>
    <property type="project" value="TreeGrafter"/>
</dbReference>
<dbReference type="GO" id="GO:0019843">
    <property type="term" value="F:rRNA binding"/>
    <property type="evidence" value="ECO:0007669"/>
    <property type="project" value="UniProtKB-UniRule"/>
</dbReference>
<dbReference type="GO" id="GO:0003735">
    <property type="term" value="F:structural constituent of ribosome"/>
    <property type="evidence" value="ECO:0007669"/>
    <property type="project" value="InterPro"/>
</dbReference>
<dbReference type="GO" id="GO:0006412">
    <property type="term" value="P:translation"/>
    <property type="evidence" value="ECO:0007669"/>
    <property type="project" value="UniProtKB-UniRule"/>
</dbReference>
<dbReference type="FunFam" id="2.40.30.10:FF:000004">
    <property type="entry name" value="50S ribosomal protein L3"/>
    <property type="match status" value="1"/>
</dbReference>
<dbReference type="FunFam" id="3.30.160.810:FF:000002">
    <property type="entry name" value="50S ribosomal protein L3"/>
    <property type="match status" value="1"/>
</dbReference>
<dbReference type="Gene3D" id="3.30.160.810">
    <property type="match status" value="1"/>
</dbReference>
<dbReference type="Gene3D" id="2.40.30.10">
    <property type="entry name" value="Translation factors"/>
    <property type="match status" value="1"/>
</dbReference>
<dbReference type="HAMAP" id="MF_01325_B">
    <property type="entry name" value="Ribosomal_uL3_B"/>
    <property type="match status" value="1"/>
</dbReference>
<dbReference type="InterPro" id="IPR000597">
    <property type="entry name" value="Ribosomal_uL3"/>
</dbReference>
<dbReference type="InterPro" id="IPR019927">
    <property type="entry name" value="Ribosomal_uL3_bac/org-type"/>
</dbReference>
<dbReference type="InterPro" id="IPR019926">
    <property type="entry name" value="Ribosomal_uL3_CS"/>
</dbReference>
<dbReference type="InterPro" id="IPR009000">
    <property type="entry name" value="Transl_B-barrel_sf"/>
</dbReference>
<dbReference type="NCBIfam" id="TIGR03625">
    <property type="entry name" value="L3_bact"/>
    <property type="match status" value="1"/>
</dbReference>
<dbReference type="PANTHER" id="PTHR11229">
    <property type="entry name" value="50S RIBOSOMAL PROTEIN L3"/>
    <property type="match status" value="1"/>
</dbReference>
<dbReference type="PANTHER" id="PTHR11229:SF16">
    <property type="entry name" value="LARGE RIBOSOMAL SUBUNIT PROTEIN UL3C"/>
    <property type="match status" value="1"/>
</dbReference>
<dbReference type="Pfam" id="PF00297">
    <property type="entry name" value="Ribosomal_L3"/>
    <property type="match status" value="1"/>
</dbReference>
<dbReference type="SUPFAM" id="SSF50447">
    <property type="entry name" value="Translation proteins"/>
    <property type="match status" value="1"/>
</dbReference>
<dbReference type="PROSITE" id="PS00474">
    <property type="entry name" value="RIBOSOMAL_L3"/>
    <property type="match status" value="1"/>
</dbReference>
<accession>Q8DS16</accession>